<feature type="chain" id="PRO_0000433545" description="Histidine--tRNA ligase, cytoplasmic">
    <location>
        <begin position="1"/>
        <end position="883"/>
    </location>
</feature>
<gene>
    <name evidence="4" type="ordered locus">At3g02760</name>
    <name type="ORF">F13E7.30</name>
</gene>
<organism>
    <name type="scientific">Arabidopsis thaliana</name>
    <name type="common">Mouse-ear cress</name>
    <dbReference type="NCBI Taxonomy" id="3702"/>
    <lineage>
        <taxon>Eukaryota</taxon>
        <taxon>Viridiplantae</taxon>
        <taxon>Streptophyta</taxon>
        <taxon>Embryophyta</taxon>
        <taxon>Tracheophyta</taxon>
        <taxon>Spermatophyta</taxon>
        <taxon>Magnoliopsida</taxon>
        <taxon>eudicotyledons</taxon>
        <taxon>Gunneridae</taxon>
        <taxon>Pentapetalae</taxon>
        <taxon>rosids</taxon>
        <taxon>malvids</taxon>
        <taxon>Brassicales</taxon>
        <taxon>Brassicaceae</taxon>
        <taxon>Camelineae</taxon>
        <taxon>Arabidopsis</taxon>
    </lineage>
</organism>
<reference key="1">
    <citation type="journal article" date="2000" name="Nature">
        <title>Sequence and analysis of chromosome 3 of the plant Arabidopsis thaliana.</title>
        <authorList>
            <person name="Salanoubat M."/>
            <person name="Lemcke K."/>
            <person name="Rieger M."/>
            <person name="Ansorge W."/>
            <person name="Unseld M."/>
            <person name="Fartmann B."/>
            <person name="Valle G."/>
            <person name="Bloecker H."/>
            <person name="Perez-Alonso M."/>
            <person name="Obermaier B."/>
            <person name="Delseny M."/>
            <person name="Boutry M."/>
            <person name="Grivell L.A."/>
            <person name="Mache R."/>
            <person name="Puigdomenech P."/>
            <person name="De Simone V."/>
            <person name="Choisne N."/>
            <person name="Artiguenave F."/>
            <person name="Robert C."/>
            <person name="Brottier P."/>
            <person name="Wincker P."/>
            <person name="Cattolico L."/>
            <person name="Weissenbach J."/>
            <person name="Saurin W."/>
            <person name="Quetier F."/>
            <person name="Schaefer M."/>
            <person name="Mueller-Auer S."/>
            <person name="Gabel C."/>
            <person name="Fuchs M."/>
            <person name="Benes V."/>
            <person name="Wurmbach E."/>
            <person name="Drzonek H."/>
            <person name="Erfle H."/>
            <person name="Jordan N."/>
            <person name="Bangert S."/>
            <person name="Wiedelmann R."/>
            <person name="Kranz H."/>
            <person name="Voss H."/>
            <person name="Holland R."/>
            <person name="Brandt P."/>
            <person name="Nyakatura G."/>
            <person name="Vezzi A."/>
            <person name="D'Angelo M."/>
            <person name="Pallavicini A."/>
            <person name="Toppo S."/>
            <person name="Simionati B."/>
            <person name="Conrad A."/>
            <person name="Hornischer K."/>
            <person name="Kauer G."/>
            <person name="Loehnert T.-H."/>
            <person name="Nordsiek G."/>
            <person name="Reichelt J."/>
            <person name="Scharfe M."/>
            <person name="Schoen O."/>
            <person name="Bargues M."/>
            <person name="Terol J."/>
            <person name="Climent J."/>
            <person name="Navarro P."/>
            <person name="Collado C."/>
            <person name="Perez-Perez A."/>
            <person name="Ottenwaelder B."/>
            <person name="Duchemin D."/>
            <person name="Cooke R."/>
            <person name="Laudie M."/>
            <person name="Berger-Llauro C."/>
            <person name="Purnelle B."/>
            <person name="Masuy D."/>
            <person name="de Haan M."/>
            <person name="Maarse A.C."/>
            <person name="Alcaraz J.-P."/>
            <person name="Cottet A."/>
            <person name="Casacuberta E."/>
            <person name="Monfort A."/>
            <person name="Argiriou A."/>
            <person name="Flores M."/>
            <person name="Liguori R."/>
            <person name="Vitale D."/>
            <person name="Mannhaupt G."/>
            <person name="Haase D."/>
            <person name="Schoof H."/>
            <person name="Rudd S."/>
            <person name="Zaccaria P."/>
            <person name="Mewes H.-W."/>
            <person name="Mayer K.F.X."/>
            <person name="Kaul S."/>
            <person name="Town C.D."/>
            <person name="Koo H.L."/>
            <person name="Tallon L.J."/>
            <person name="Jenkins J."/>
            <person name="Rooney T."/>
            <person name="Rizzo M."/>
            <person name="Walts A."/>
            <person name="Utterback T."/>
            <person name="Fujii C.Y."/>
            <person name="Shea T.P."/>
            <person name="Creasy T.H."/>
            <person name="Haas B."/>
            <person name="Maiti R."/>
            <person name="Wu D."/>
            <person name="Peterson J."/>
            <person name="Van Aken S."/>
            <person name="Pai G."/>
            <person name="Militscher J."/>
            <person name="Sellers P."/>
            <person name="Gill J.E."/>
            <person name="Feldblyum T.V."/>
            <person name="Preuss D."/>
            <person name="Lin X."/>
            <person name="Nierman W.C."/>
            <person name="Salzberg S.L."/>
            <person name="White O."/>
            <person name="Venter J.C."/>
            <person name="Fraser C.M."/>
            <person name="Kaneko T."/>
            <person name="Nakamura Y."/>
            <person name="Sato S."/>
            <person name="Kato T."/>
            <person name="Asamizu E."/>
            <person name="Sasamoto S."/>
            <person name="Kimura T."/>
            <person name="Idesawa K."/>
            <person name="Kawashima K."/>
            <person name="Kishida Y."/>
            <person name="Kiyokawa C."/>
            <person name="Kohara M."/>
            <person name="Matsumoto M."/>
            <person name="Matsuno A."/>
            <person name="Muraki A."/>
            <person name="Nakayama S."/>
            <person name="Nakazaki N."/>
            <person name="Shinpo S."/>
            <person name="Takeuchi C."/>
            <person name="Wada T."/>
            <person name="Watanabe A."/>
            <person name="Yamada M."/>
            <person name="Yasuda M."/>
            <person name="Tabata S."/>
        </authorList>
    </citation>
    <scope>NUCLEOTIDE SEQUENCE [LARGE SCALE GENOMIC DNA]</scope>
    <source>
        <strain>cv. Columbia</strain>
    </source>
</reference>
<reference key="2">
    <citation type="journal article" date="2017" name="Plant J.">
        <title>Araport11: a complete reannotation of the Arabidopsis thaliana reference genome.</title>
        <authorList>
            <person name="Cheng C.Y."/>
            <person name="Krishnakumar V."/>
            <person name="Chan A.P."/>
            <person name="Thibaud-Nissen F."/>
            <person name="Schobel S."/>
            <person name="Town C.D."/>
        </authorList>
    </citation>
    <scope>GENOME REANNOTATION</scope>
    <source>
        <strain>cv. Columbia</strain>
    </source>
</reference>
<reference key="3">
    <citation type="submission" date="2006-07" db="EMBL/GenBank/DDBJ databases">
        <title>Large-scale analysis of RIKEN Arabidopsis full-length (RAFL) cDNAs.</title>
        <authorList>
            <person name="Totoki Y."/>
            <person name="Seki M."/>
            <person name="Ishida J."/>
            <person name="Nakajima M."/>
            <person name="Enju A."/>
            <person name="Kamiya A."/>
            <person name="Narusaka M."/>
            <person name="Shin-i T."/>
            <person name="Nakagawa M."/>
            <person name="Sakamoto N."/>
            <person name="Oishi K."/>
            <person name="Kohara Y."/>
            <person name="Kobayashi M."/>
            <person name="Toyoda A."/>
            <person name="Sakaki Y."/>
            <person name="Sakurai T."/>
            <person name="Iida K."/>
            <person name="Akiyama K."/>
            <person name="Satou M."/>
            <person name="Toyoda T."/>
            <person name="Konagaya A."/>
            <person name="Carninci P."/>
            <person name="Kawai J."/>
            <person name="Hayashizaki Y."/>
            <person name="Shinozaki K."/>
        </authorList>
    </citation>
    <scope>NUCLEOTIDE SEQUENCE [LARGE SCALE MRNA] OF 689-883</scope>
    <source>
        <strain>cv. Columbia</strain>
    </source>
</reference>
<reference key="4">
    <citation type="journal article" date="2005" name="Plant J.">
        <title>Requirement of aminoacyl-tRNA synthetases for gametogenesis and embryo development in Arabidopsis.</title>
        <authorList>
            <person name="Berg M."/>
            <person name="Rogers R."/>
            <person name="Muralla R."/>
            <person name="Meinke D."/>
        </authorList>
    </citation>
    <scope>SUBCELLULAR LOCATION</scope>
</reference>
<reference key="5">
    <citation type="journal article" date="2005" name="Proc. Natl. Acad. Sci. U.S.A.">
        <title>Dual targeting is the rule for organellar aminoacyl-tRNA synthetases in Arabidopsis thaliana.</title>
        <authorList>
            <person name="Duchene A.-M."/>
            <person name="Giritch A."/>
            <person name="Hoffmann B."/>
            <person name="Cognat V."/>
            <person name="Lancelin D."/>
            <person name="Peeters N.M."/>
            <person name="Zaepfel M."/>
            <person name="Marechal-Drouard L."/>
            <person name="Small I.D."/>
        </authorList>
    </citation>
    <scope>SUBCELLULAR LOCATION</scope>
</reference>
<keyword id="KW-0030">Aminoacyl-tRNA synthetase</keyword>
<keyword id="KW-0067">ATP-binding</keyword>
<keyword id="KW-0963">Cytoplasm</keyword>
<keyword id="KW-0436">Ligase</keyword>
<keyword id="KW-0547">Nucleotide-binding</keyword>
<keyword id="KW-0648">Protein biosynthesis</keyword>
<keyword id="KW-1185">Reference proteome</keyword>
<evidence type="ECO:0000305" key="1"/>
<evidence type="ECO:0000305" key="2">
    <source>
    </source>
</evidence>
<evidence type="ECO:0000305" key="3">
    <source>
    </source>
</evidence>
<evidence type="ECO:0000312" key="4">
    <source>
        <dbReference type="Araport" id="AT3G02760"/>
    </source>
</evidence>
<name>SYHC_ARATH</name>
<sequence length="883" mass="97537">MAAERSSITLGGKGSSLSSSSVYNVASGVANVRIDSSAIERFSTRNVPSIKRSSFGIPQGLTNEETRASLAVLLNKLILSTSGPPSSSTARSVLPLKIVEILNLKAESLELGEIDVTEGENIVLEKSCASLIGICSIIDHKSTTLSQIVDSVAALSCEVTKADIASFSLLDSGDGNGDKDVIGVAGDLKVLLNGYKGTGKLEIEEISKIPWIHGKFRYVVKSVHADARRELNSGVKGGKTGSGNTGIGEALGTTLLPLLTAIKNLGVCSFLRAKLCFEKIVDENLKKCLSEKICVENENLKNSYKLAYTAHLEEDYCRFAHKLNECLGIVWRIVGLEAVAAFFALAGGELFVQKSGDADKEESKTDKKKKKNEKKAVVGKGTSLVIQFIKDRLVSNDAASDGDQMHSLMQCGEQILNLFNPEGRSFDSLLDKVKEIVESNENRRLPKLPKGTRDFAKEQMAVREKAFSIIQNVFKRHGATALDTPVFELRETLMGKYGEDSKLVYDIADQGGELCSLRYDLTVPFARYVAMNGITSFKRYQIAKVYRRDNPSKGRYREFYQCDFDIAGLFEPMGPDFEIVKILTELLDELEIGDYEVKLNHRKLLDGMLEICGVPPEKFRTICSSIDKLDKQSFEQVKKEMVEEKGLSSEIADRIGNFVKEKGAPLELLSKLRQEGSEFLDNQSSREALDELSIMFEALKRSKCSERIVFDLSLARGLDYYTGVIFEAVCIGAEVGSIGAGGRYDNLIGMFGTKQVPAVGMSLGIERVFNIMEELNEKQKQVIRPTETQVLVSIMVDNKLAEAAELVSQLWGAKINAEYLVSKRKEKHFNRAKESGIPWMVMVGEKELSGSFVTLKKLEKGSEEKEDQTCTRDRFVEELKKLL</sequence>
<accession>F4IYF8</accession>
<accession>Q0WN73</accession>
<accession>Q9M8R8</accession>
<protein>
    <recommendedName>
        <fullName evidence="1">Histidine--tRNA ligase, cytoplasmic</fullName>
        <ecNumber evidence="1">6.1.1.21</ecNumber>
    </recommendedName>
    <alternativeName>
        <fullName evidence="1">Histidyl-tRNA synthetase</fullName>
        <shortName evidence="1">HisRS</shortName>
    </alternativeName>
</protein>
<dbReference type="EC" id="6.1.1.21" evidence="1"/>
<dbReference type="EMBL" id="AC018363">
    <property type="protein sequence ID" value="AAF26984.1"/>
    <property type="status" value="ALT_SEQ"/>
    <property type="molecule type" value="Genomic_DNA"/>
</dbReference>
<dbReference type="EMBL" id="CP002686">
    <property type="protein sequence ID" value="AEE73857.1"/>
    <property type="molecule type" value="Genomic_DNA"/>
</dbReference>
<dbReference type="EMBL" id="CP002686">
    <property type="protein sequence ID" value="ANM63728.1"/>
    <property type="molecule type" value="Genomic_DNA"/>
</dbReference>
<dbReference type="EMBL" id="AK229577">
    <property type="protein sequence ID" value="BAF01427.1"/>
    <property type="molecule type" value="mRNA"/>
</dbReference>
<dbReference type="RefSeq" id="NP_001325800.1">
    <property type="nucleotide sequence ID" value="NM_001337433.1"/>
</dbReference>
<dbReference type="RefSeq" id="NP_186925.4">
    <property type="nucleotide sequence ID" value="NM_111144.6"/>
</dbReference>
<dbReference type="SMR" id="F4IYF8"/>
<dbReference type="FunCoup" id="F4IYF8">
    <property type="interactions" value="2569"/>
</dbReference>
<dbReference type="STRING" id="3702.F4IYF8"/>
<dbReference type="PaxDb" id="3702-AT3G02760.1"/>
<dbReference type="ProteomicsDB" id="233059"/>
<dbReference type="EnsemblPlants" id="AT3G02760.1">
    <property type="protein sequence ID" value="AT3G02760.1"/>
    <property type="gene ID" value="AT3G02760"/>
</dbReference>
<dbReference type="EnsemblPlants" id="AT3G02760.2">
    <property type="protein sequence ID" value="AT3G02760.2"/>
    <property type="gene ID" value="AT3G02760"/>
</dbReference>
<dbReference type="GeneID" id="820930"/>
<dbReference type="Gramene" id="AT3G02760.1">
    <property type="protein sequence ID" value="AT3G02760.1"/>
    <property type="gene ID" value="AT3G02760"/>
</dbReference>
<dbReference type="Gramene" id="AT3G02760.2">
    <property type="protein sequence ID" value="AT3G02760.2"/>
    <property type="gene ID" value="AT3G02760"/>
</dbReference>
<dbReference type="KEGG" id="ath:AT3G02760"/>
<dbReference type="Araport" id="AT3G02760"/>
<dbReference type="TAIR" id="AT3G02760"/>
<dbReference type="eggNOG" id="KOG1936">
    <property type="taxonomic scope" value="Eukaryota"/>
</dbReference>
<dbReference type="HOGENOM" id="CLU_006858_0_0_1"/>
<dbReference type="InParanoid" id="F4IYF8"/>
<dbReference type="OMA" id="IDCCASP"/>
<dbReference type="PRO" id="PR:F4IYF8"/>
<dbReference type="Proteomes" id="UP000006548">
    <property type="component" value="Chromosome 3"/>
</dbReference>
<dbReference type="ExpressionAtlas" id="F4IYF8">
    <property type="expression patterns" value="baseline and differential"/>
</dbReference>
<dbReference type="GO" id="GO:0005829">
    <property type="term" value="C:cytosol"/>
    <property type="evidence" value="ECO:0007669"/>
    <property type="project" value="UniProtKB-SubCell"/>
</dbReference>
<dbReference type="GO" id="GO:0005524">
    <property type="term" value="F:ATP binding"/>
    <property type="evidence" value="ECO:0007669"/>
    <property type="project" value="UniProtKB-KW"/>
</dbReference>
<dbReference type="GO" id="GO:0004821">
    <property type="term" value="F:histidine-tRNA ligase activity"/>
    <property type="evidence" value="ECO:0007669"/>
    <property type="project" value="UniProtKB-EC"/>
</dbReference>
<dbReference type="GO" id="GO:0006427">
    <property type="term" value="P:histidyl-tRNA aminoacylation"/>
    <property type="evidence" value="ECO:0007669"/>
    <property type="project" value="InterPro"/>
</dbReference>
<dbReference type="CDD" id="cd00773">
    <property type="entry name" value="HisRS-like_core"/>
    <property type="match status" value="1"/>
</dbReference>
<dbReference type="CDD" id="cd00859">
    <property type="entry name" value="HisRS_anticodon"/>
    <property type="match status" value="1"/>
</dbReference>
<dbReference type="FunFam" id="3.30.930.10:FF:000061">
    <property type="entry name" value="Histidine--tRNA ligase, cytoplasmic"/>
    <property type="match status" value="1"/>
</dbReference>
<dbReference type="FunFam" id="3.40.50.800:FF:000012">
    <property type="entry name" value="Histidine--tRNA ligase, cytoplasmic"/>
    <property type="match status" value="1"/>
</dbReference>
<dbReference type="Gene3D" id="3.40.50.800">
    <property type="entry name" value="Anticodon-binding domain"/>
    <property type="match status" value="1"/>
</dbReference>
<dbReference type="Gene3D" id="3.30.930.10">
    <property type="entry name" value="Bira Bifunctional Protein, Domain 2"/>
    <property type="match status" value="1"/>
</dbReference>
<dbReference type="HAMAP" id="MF_00127">
    <property type="entry name" value="His_tRNA_synth"/>
    <property type="match status" value="1"/>
</dbReference>
<dbReference type="InterPro" id="IPR006195">
    <property type="entry name" value="aa-tRNA-synth_II"/>
</dbReference>
<dbReference type="InterPro" id="IPR045864">
    <property type="entry name" value="aa-tRNA-synth_II/BPL/LPL"/>
</dbReference>
<dbReference type="InterPro" id="IPR004154">
    <property type="entry name" value="Anticodon-bd"/>
</dbReference>
<dbReference type="InterPro" id="IPR036621">
    <property type="entry name" value="Anticodon-bd_dom_sf"/>
</dbReference>
<dbReference type="InterPro" id="IPR015807">
    <property type="entry name" value="His-tRNA-ligase"/>
</dbReference>
<dbReference type="InterPro" id="IPR041715">
    <property type="entry name" value="HisRS-like_core"/>
</dbReference>
<dbReference type="InterPro" id="IPR033656">
    <property type="entry name" value="HisRS_anticodon"/>
</dbReference>
<dbReference type="NCBIfam" id="TIGR00442">
    <property type="entry name" value="hisS"/>
    <property type="match status" value="1"/>
</dbReference>
<dbReference type="PANTHER" id="PTHR11476:SF7">
    <property type="entry name" value="HISTIDINE--TRNA LIGASE"/>
    <property type="match status" value="1"/>
</dbReference>
<dbReference type="PANTHER" id="PTHR11476">
    <property type="entry name" value="HISTIDYL-TRNA SYNTHETASE"/>
    <property type="match status" value="1"/>
</dbReference>
<dbReference type="Pfam" id="PF03129">
    <property type="entry name" value="HGTP_anticodon"/>
    <property type="match status" value="1"/>
</dbReference>
<dbReference type="Pfam" id="PF13393">
    <property type="entry name" value="tRNA-synt_His"/>
    <property type="match status" value="1"/>
</dbReference>
<dbReference type="SUPFAM" id="SSF52954">
    <property type="entry name" value="Class II aaRS ABD-related"/>
    <property type="match status" value="1"/>
</dbReference>
<dbReference type="SUPFAM" id="SSF55681">
    <property type="entry name" value="Class II aaRS and biotin synthetases"/>
    <property type="match status" value="1"/>
</dbReference>
<dbReference type="PROSITE" id="PS50862">
    <property type="entry name" value="AA_TRNA_LIGASE_II"/>
    <property type="match status" value="1"/>
</dbReference>
<comment type="catalytic activity">
    <reaction evidence="1">
        <text>tRNA(His) + L-histidine + ATP = L-histidyl-tRNA(His) + AMP + diphosphate + H(+)</text>
        <dbReference type="Rhea" id="RHEA:17313"/>
        <dbReference type="Rhea" id="RHEA-COMP:9665"/>
        <dbReference type="Rhea" id="RHEA-COMP:9689"/>
        <dbReference type="ChEBI" id="CHEBI:15378"/>
        <dbReference type="ChEBI" id="CHEBI:30616"/>
        <dbReference type="ChEBI" id="CHEBI:33019"/>
        <dbReference type="ChEBI" id="CHEBI:57595"/>
        <dbReference type="ChEBI" id="CHEBI:78442"/>
        <dbReference type="ChEBI" id="CHEBI:78527"/>
        <dbReference type="ChEBI" id="CHEBI:456215"/>
        <dbReference type="EC" id="6.1.1.21"/>
    </reaction>
</comment>
<comment type="subcellular location">
    <subcellularLocation>
        <location evidence="2 3">Cytoplasm</location>
        <location evidence="2 3">Cytosol</location>
    </subcellularLocation>
</comment>
<comment type="similarity">
    <text evidence="1">Belongs to the class-II aminoacyl-tRNA synthetase family.</text>
</comment>
<comment type="sequence caution" evidence="1">
    <conflict type="erroneous gene model prediction">
        <sequence resource="EMBL-CDS" id="AAF26984"/>
    </conflict>
</comment>
<proteinExistence type="evidence at transcript level"/>